<gene>
    <name type="primary">CD300A</name>
    <name type="synonym">CMRF35H</name>
    <name type="synonym">IGSF12</name>
    <name type="ORF">HSPC083</name>
</gene>
<proteinExistence type="evidence at protein level"/>
<keyword id="KW-0002">3D-structure</keyword>
<keyword id="KW-0025">Alternative splicing</keyword>
<keyword id="KW-0130">Cell adhesion</keyword>
<keyword id="KW-1003">Cell membrane</keyword>
<keyword id="KW-1015">Disulfide bond</keyword>
<keyword id="KW-0325">Glycoprotein</keyword>
<keyword id="KW-0391">Immunity</keyword>
<keyword id="KW-0393">Immunoglobulin domain</keyword>
<keyword id="KW-0472">Membrane</keyword>
<keyword id="KW-0597">Phosphoprotein</keyword>
<keyword id="KW-1267">Proteomics identification</keyword>
<keyword id="KW-0675">Receptor</keyword>
<keyword id="KW-1185">Reference proteome</keyword>
<keyword id="KW-0732">Signal</keyword>
<keyword id="KW-0812">Transmembrane</keyword>
<keyword id="KW-1133">Transmembrane helix</keyword>
<feature type="signal peptide" evidence="2">
    <location>
        <begin position="1"/>
        <end position="17"/>
    </location>
</feature>
<feature type="chain" id="PRO_0000014682" description="CMRF35-like molecule 8">
    <location>
        <begin position="18"/>
        <end position="299"/>
    </location>
</feature>
<feature type="topological domain" description="Extracellular" evidence="2">
    <location>
        <begin position="18"/>
        <end position="180"/>
    </location>
</feature>
<feature type="transmembrane region" description="Helical" evidence="2">
    <location>
        <begin position="181"/>
        <end position="201"/>
    </location>
</feature>
<feature type="topological domain" description="Cytoplasmic" evidence="2">
    <location>
        <begin position="202"/>
        <end position="299"/>
    </location>
</feature>
<feature type="domain" description="Ig-like V-type">
    <location>
        <begin position="19"/>
        <end position="123"/>
    </location>
</feature>
<feature type="region of interest" description="Disordered" evidence="4">
    <location>
        <begin position="278"/>
        <end position="299"/>
    </location>
</feature>
<feature type="modified residue" description="Phosphotyrosine" evidence="1">
    <location>
        <position position="293"/>
    </location>
</feature>
<feature type="glycosylation site" description="N-linked (GlcNAc...) asparagine" evidence="2">
    <location>
        <position position="83"/>
    </location>
</feature>
<feature type="glycosylation site" description="N-linked (GlcNAc...) asparagine" evidence="2">
    <location>
        <position position="92"/>
    </location>
</feature>
<feature type="disulfide bond" evidence="3">
    <location>
        <begin position="36"/>
        <end position="103"/>
    </location>
</feature>
<feature type="splice variant" id="VSP_010558" description="In isoform 3." evidence="12">
    <location>
        <begin position="14"/>
        <end position="209"/>
    </location>
</feature>
<feature type="splice variant" id="VSP_010559" description="In isoform 2 and isoform 4." evidence="12 13">
    <location>
        <begin position="14"/>
        <end position="126"/>
    </location>
</feature>
<feature type="splice variant" id="VSP_041246" description="In isoform 4." evidence="13">
    <location>
        <begin position="223"/>
        <end position="258"/>
    </location>
</feature>
<feature type="sequence variant" id="VAR_030797" description="In dbSNP:rs2272111." evidence="7 11">
    <original>R</original>
    <variation>Q</variation>
    <location>
        <position position="111"/>
    </location>
</feature>
<feature type="sequence conflict" description="In Ref. 3; AAD01646 and 4; AAF89957." evidence="14" ref="3 4">
    <original>VG</original>
    <variation>W</variation>
    <location>
        <begin position="28"/>
        <end position="29"/>
    </location>
</feature>
<feature type="sequence conflict" description="In Ref. 4; AAF89957." evidence="14" ref="4">
    <original>E</original>
    <variation>Q</variation>
    <location>
        <position position="39"/>
    </location>
</feature>
<feature type="sequence conflict" description="In Ref. 5; AAF28906." evidence="14" ref="5">
    <original>L</original>
    <variation>M</variation>
    <location>
        <position position="189"/>
    </location>
</feature>
<feature type="sequence conflict" description="In Ref. 5; AAF28906." evidence="14" ref="5">
    <original>L</original>
    <variation>M</variation>
    <location>
        <position position="193"/>
    </location>
</feature>
<feature type="sequence conflict" description="In Ref. 3; AAD01646." evidence="14" ref="3">
    <original>K</original>
    <variation>KWIK</variation>
    <location>
        <position position="209"/>
    </location>
</feature>
<feature type="sequence conflict" description="In Ref. 5; AAF28906." evidence="14" ref="5">
    <original>S</original>
    <variation>F</variation>
    <location>
        <position position="260"/>
    </location>
</feature>
<feature type="strand" evidence="15">
    <location>
        <begin position="20"/>
        <end position="27"/>
    </location>
</feature>
<feature type="strand" evidence="15">
    <location>
        <begin position="32"/>
        <end position="37"/>
    </location>
</feature>
<feature type="helix" evidence="15">
    <location>
        <begin position="40"/>
        <end position="42"/>
    </location>
</feature>
<feature type="strand" evidence="15">
    <location>
        <begin position="45"/>
        <end position="51"/>
    </location>
</feature>
<feature type="strand" evidence="15">
    <location>
        <begin position="54"/>
        <end position="57"/>
    </location>
</feature>
<feature type="strand" evidence="15">
    <location>
        <begin position="61"/>
        <end position="66"/>
    </location>
</feature>
<feature type="strand" evidence="15">
    <location>
        <begin position="70"/>
        <end position="72"/>
    </location>
</feature>
<feature type="strand" evidence="15">
    <location>
        <begin position="75"/>
        <end position="80"/>
    </location>
</feature>
<feature type="helix" evidence="15">
    <location>
        <begin position="81"/>
        <end position="83"/>
    </location>
</feature>
<feature type="strand" evidence="15">
    <location>
        <begin position="85"/>
        <end position="92"/>
    </location>
</feature>
<feature type="helix" evidence="15">
    <location>
        <begin position="95"/>
        <end position="97"/>
    </location>
</feature>
<feature type="strand" evidence="15">
    <location>
        <begin position="99"/>
        <end position="106"/>
    </location>
</feature>
<feature type="strand" evidence="15">
    <location>
        <begin position="117"/>
        <end position="125"/>
    </location>
</feature>
<sequence>MWLPWALLLLWVPGCFALSKCRTVAGPVGGSLSVQCPYEKEHRTLNKYWCRPPQIFLCDKIVETKGSAGKRNGRVSIRDSPANLSFTVTLENLTEEDAGTYWCGVDTPWLRDFHDPVVEVEVSVFPASTSMTPASITAAKTSTITTAFPPVSSTTLFAVGATHSASIQEETEEVVNSQLPLLLSLLALLLLLLVGASLLAWRMFQKWIKAGDHSELSQNPKQAATQSELHYANLELLMWPLQEKPAPPREVEVEYSTVASPREELHYASVVFDSNTNRIAAQRPREEEPDSDYSVIRKT</sequence>
<name>CLM8_HUMAN</name>
<dbReference type="EMBL" id="AJ238323">
    <property type="protein sequence ID" value="CAB66145.1"/>
    <property type="molecule type" value="mRNA"/>
</dbReference>
<dbReference type="EMBL" id="AJ010101">
    <property type="protein sequence ID" value="CAB52291.1"/>
    <property type="molecule type" value="mRNA"/>
</dbReference>
<dbReference type="EMBL" id="AJ010102">
    <property type="protein sequence ID" value="CAB52292.1"/>
    <property type="molecule type" value="mRNA"/>
</dbReference>
<dbReference type="EMBL" id="AJ010103">
    <property type="protein sequence ID" value="CAB52293.1"/>
    <property type="molecule type" value="mRNA"/>
</dbReference>
<dbReference type="EMBL" id="AJ224864">
    <property type="protein sequence ID" value="CAB55347.1"/>
    <property type="molecule type" value="mRNA"/>
</dbReference>
<dbReference type="EMBL" id="AF020314">
    <property type="protein sequence ID" value="AAD01646.1"/>
    <property type="molecule type" value="mRNA"/>
</dbReference>
<dbReference type="EMBL" id="AF176991">
    <property type="protein sequence ID" value="AAF89957.1"/>
    <property type="molecule type" value="Genomic_DNA"/>
</dbReference>
<dbReference type="EMBL" id="AF176985">
    <property type="protein sequence ID" value="AAF89957.1"/>
    <property type="status" value="JOINED"/>
    <property type="molecule type" value="Genomic_DNA"/>
</dbReference>
<dbReference type="EMBL" id="AF176986">
    <property type="protein sequence ID" value="AAF89957.1"/>
    <property type="status" value="JOINED"/>
    <property type="molecule type" value="Genomic_DNA"/>
</dbReference>
<dbReference type="EMBL" id="AF176987">
    <property type="protein sequence ID" value="AAF89957.1"/>
    <property type="status" value="JOINED"/>
    <property type="molecule type" value="Genomic_DNA"/>
</dbReference>
<dbReference type="EMBL" id="AF176988">
    <property type="protein sequence ID" value="AAF89957.1"/>
    <property type="status" value="JOINED"/>
    <property type="molecule type" value="Genomic_DNA"/>
</dbReference>
<dbReference type="EMBL" id="AF176989">
    <property type="protein sequence ID" value="AAF89957.1"/>
    <property type="status" value="JOINED"/>
    <property type="molecule type" value="Genomic_DNA"/>
</dbReference>
<dbReference type="EMBL" id="AF176990">
    <property type="protein sequence ID" value="AAF89957.1"/>
    <property type="status" value="JOINED"/>
    <property type="molecule type" value="Genomic_DNA"/>
</dbReference>
<dbReference type="EMBL" id="AF161346">
    <property type="protein sequence ID" value="AAF28906.1"/>
    <property type="status" value="ALT_SEQ"/>
    <property type="molecule type" value="mRNA"/>
</dbReference>
<dbReference type="EMBL" id="AC079325">
    <property type="status" value="NOT_ANNOTATED_CDS"/>
    <property type="molecule type" value="Genomic_DNA"/>
</dbReference>
<dbReference type="EMBL" id="BC032352">
    <property type="protein sequence ID" value="AAH32352.1"/>
    <property type="molecule type" value="mRNA"/>
</dbReference>
<dbReference type="CCDS" id="CCDS32720.1">
    <molecule id="Q9UGN4-1"/>
</dbReference>
<dbReference type="CCDS" id="CCDS58590.1">
    <molecule id="Q9UGN4-2"/>
</dbReference>
<dbReference type="CCDS" id="CCDS82196.1">
    <molecule id="Q9UGN4-4"/>
</dbReference>
<dbReference type="RefSeq" id="NP_001243770.1">
    <molecule id="Q9UGN4-2"/>
    <property type="nucleotide sequence ID" value="NM_001256841.2"/>
</dbReference>
<dbReference type="RefSeq" id="NP_001317386.1">
    <molecule id="Q9UGN4-4"/>
    <property type="nucleotide sequence ID" value="NM_001330457.2"/>
</dbReference>
<dbReference type="RefSeq" id="NP_009192.2">
    <molecule id="Q9UGN4-1"/>
    <property type="nucleotide sequence ID" value="NM_007261.4"/>
</dbReference>
<dbReference type="PDB" id="2Q87">
    <property type="method" value="X-ray"/>
    <property type="resolution" value="1.70 A"/>
    <property type="chains" value="A/B/C=19-125"/>
</dbReference>
<dbReference type="PDBsum" id="2Q87"/>
<dbReference type="SASBDB" id="Q9UGN4"/>
<dbReference type="SMR" id="Q9UGN4"/>
<dbReference type="BioGRID" id="116445">
    <property type="interactions" value="7"/>
</dbReference>
<dbReference type="FunCoup" id="Q9UGN4">
    <property type="interactions" value="296"/>
</dbReference>
<dbReference type="IntAct" id="Q9UGN4">
    <property type="interactions" value="12"/>
</dbReference>
<dbReference type="STRING" id="9606.ENSP00000353259"/>
<dbReference type="GlyCosmos" id="Q9UGN4">
    <property type="glycosylation" value="2 sites, No reported glycans"/>
</dbReference>
<dbReference type="GlyGen" id="Q9UGN4">
    <property type="glycosylation" value="2 sites"/>
</dbReference>
<dbReference type="iPTMnet" id="Q9UGN4"/>
<dbReference type="PhosphoSitePlus" id="Q9UGN4"/>
<dbReference type="BioMuta" id="CD300A"/>
<dbReference type="DMDM" id="126302534"/>
<dbReference type="jPOST" id="Q9UGN4"/>
<dbReference type="MassIVE" id="Q9UGN4"/>
<dbReference type="PaxDb" id="9606-ENSP00000353259"/>
<dbReference type="PeptideAtlas" id="Q9UGN4"/>
<dbReference type="ProteomicsDB" id="84246">
    <molecule id="Q9UGN4-1"/>
</dbReference>
<dbReference type="ProteomicsDB" id="84247">
    <molecule id="Q9UGN4-2"/>
</dbReference>
<dbReference type="ProteomicsDB" id="84248">
    <molecule id="Q9UGN4-3"/>
</dbReference>
<dbReference type="ProteomicsDB" id="84249">
    <molecule id="Q9UGN4-4"/>
</dbReference>
<dbReference type="TopDownProteomics" id="Q9UGN4-1">
    <molecule id="Q9UGN4-1"/>
</dbReference>
<dbReference type="Antibodypedia" id="2610">
    <property type="antibodies" value="357 antibodies from 29 providers"/>
</dbReference>
<dbReference type="DNASU" id="11314"/>
<dbReference type="Ensembl" id="ENST00000310828.10">
    <molecule id="Q9UGN4-2"/>
    <property type="protein sequence ID" value="ENSP00000308188.5"/>
    <property type="gene ID" value="ENSG00000167851.16"/>
</dbReference>
<dbReference type="Ensembl" id="ENST00000360141.8">
    <molecule id="Q9UGN4-1"/>
    <property type="protein sequence ID" value="ENSP00000353259.3"/>
    <property type="gene ID" value="ENSG00000167851.16"/>
</dbReference>
<dbReference type="Ensembl" id="ENST00000361933.7">
    <molecule id="Q9UGN4-3"/>
    <property type="protein sequence ID" value="ENSP00000354564.3"/>
    <property type="gene ID" value="ENSG00000167851.16"/>
</dbReference>
<dbReference type="Ensembl" id="ENST00000392625.7">
    <molecule id="Q9UGN4-4"/>
    <property type="protein sequence ID" value="ENSP00000376401.3"/>
    <property type="gene ID" value="ENSG00000167851.16"/>
</dbReference>
<dbReference type="Ensembl" id="ENST00000709202.1">
    <molecule id="Q9UGN4-1"/>
    <property type="protein sequence ID" value="ENSP00000517551.1"/>
    <property type="gene ID" value="ENSG00000291918.1"/>
</dbReference>
<dbReference type="Ensembl" id="ENST00000709203.1">
    <molecule id="Q9UGN4-4"/>
    <property type="protein sequence ID" value="ENSP00000517552.1"/>
    <property type="gene ID" value="ENSG00000291918.1"/>
</dbReference>
<dbReference type="Ensembl" id="ENST00000709204.1">
    <molecule id="Q9UGN4-2"/>
    <property type="protein sequence ID" value="ENSP00000517553.1"/>
    <property type="gene ID" value="ENSG00000291918.1"/>
</dbReference>
<dbReference type="Ensembl" id="ENST00000709205.1">
    <molecule id="Q9UGN4-3"/>
    <property type="protein sequence ID" value="ENSP00000517554.1"/>
    <property type="gene ID" value="ENSG00000291918.1"/>
</dbReference>
<dbReference type="GeneID" id="11314"/>
<dbReference type="KEGG" id="hsa:11314"/>
<dbReference type="MANE-Select" id="ENST00000360141.8">
    <property type="protein sequence ID" value="ENSP00000353259.3"/>
    <property type="RefSeq nucleotide sequence ID" value="NM_007261.4"/>
    <property type="RefSeq protein sequence ID" value="NP_009192.2"/>
</dbReference>
<dbReference type="UCSC" id="uc002jkv.5">
    <molecule id="Q9UGN4-1"/>
    <property type="organism name" value="human"/>
</dbReference>
<dbReference type="AGR" id="HGNC:19319"/>
<dbReference type="CTD" id="11314"/>
<dbReference type="DisGeNET" id="11314"/>
<dbReference type="GeneCards" id="CD300A"/>
<dbReference type="HGNC" id="HGNC:19319">
    <property type="gene designation" value="CD300A"/>
</dbReference>
<dbReference type="HPA" id="ENSG00000167851">
    <property type="expression patterns" value="Tissue enhanced (lymphoid)"/>
</dbReference>
<dbReference type="MIM" id="606790">
    <property type="type" value="gene"/>
</dbReference>
<dbReference type="neXtProt" id="NX_Q9UGN4"/>
<dbReference type="OpenTargets" id="ENSG00000167851"/>
<dbReference type="PharmGKB" id="PA142672149"/>
<dbReference type="VEuPathDB" id="HostDB:ENSG00000167851"/>
<dbReference type="eggNOG" id="ENOG502S7MA">
    <property type="taxonomic scope" value="Eukaryota"/>
</dbReference>
<dbReference type="GeneTree" id="ENSGT00940000163943"/>
<dbReference type="HOGENOM" id="CLU_051023_0_0_1"/>
<dbReference type="InParanoid" id="Q9UGN4"/>
<dbReference type="OMA" id="YANMELQ"/>
<dbReference type="OrthoDB" id="8959642at2759"/>
<dbReference type="PAN-GO" id="Q9UGN4">
    <property type="GO annotations" value="2 GO annotations based on evolutionary models"/>
</dbReference>
<dbReference type="PhylomeDB" id="Q9UGN4"/>
<dbReference type="TreeFam" id="TF334441"/>
<dbReference type="PathwayCommons" id="Q9UGN4"/>
<dbReference type="Reactome" id="R-HSA-198933">
    <property type="pathway name" value="Immunoregulatory interactions between a Lymphoid and a non-Lymphoid cell"/>
</dbReference>
<dbReference type="Reactome" id="R-HSA-6798695">
    <property type="pathway name" value="Neutrophil degranulation"/>
</dbReference>
<dbReference type="SignaLink" id="Q9UGN4"/>
<dbReference type="BioGRID-ORCS" id="11314">
    <property type="hits" value="9 hits in 1144 CRISPR screens"/>
</dbReference>
<dbReference type="ChiTaRS" id="CD300A">
    <property type="organism name" value="human"/>
</dbReference>
<dbReference type="EvolutionaryTrace" id="Q9UGN4"/>
<dbReference type="GeneWiki" id="CD300A"/>
<dbReference type="GenomeRNAi" id="11314"/>
<dbReference type="Pharos" id="Q9UGN4">
    <property type="development level" value="Tbio"/>
</dbReference>
<dbReference type="PRO" id="PR:Q9UGN4"/>
<dbReference type="Proteomes" id="UP000005640">
    <property type="component" value="Chromosome 17"/>
</dbReference>
<dbReference type="RNAct" id="Q9UGN4">
    <property type="molecule type" value="protein"/>
</dbReference>
<dbReference type="Bgee" id="ENSG00000167851">
    <property type="expression patterns" value="Expressed in granulocyte and 147 other cell types or tissues"/>
</dbReference>
<dbReference type="ExpressionAtlas" id="Q9UGN4">
    <property type="expression patterns" value="baseline and differential"/>
</dbReference>
<dbReference type="GO" id="GO:0070062">
    <property type="term" value="C:extracellular exosome"/>
    <property type="evidence" value="ECO:0007005"/>
    <property type="project" value="UniProtKB"/>
</dbReference>
<dbReference type="GO" id="GO:0101003">
    <property type="term" value="C:ficolin-1-rich granule membrane"/>
    <property type="evidence" value="ECO:0000304"/>
    <property type="project" value="Reactome"/>
</dbReference>
<dbReference type="GO" id="GO:0016020">
    <property type="term" value="C:membrane"/>
    <property type="evidence" value="ECO:0000314"/>
    <property type="project" value="UniProtKB"/>
</dbReference>
<dbReference type="GO" id="GO:0005886">
    <property type="term" value="C:plasma membrane"/>
    <property type="evidence" value="ECO:0000318"/>
    <property type="project" value="GO_Central"/>
</dbReference>
<dbReference type="GO" id="GO:0070821">
    <property type="term" value="C:tertiary granule membrane"/>
    <property type="evidence" value="ECO:0000304"/>
    <property type="project" value="Reactome"/>
</dbReference>
<dbReference type="GO" id="GO:0008429">
    <property type="term" value="F:phosphatidylethanolamine binding"/>
    <property type="evidence" value="ECO:0000314"/>
    <property type="project" value="UniProtKB"/>
</dbReference>
<dbReference type="GO" id="GO:0001786">
    <property type="term" value="F:phosphatidylserine binding"/>
    <property type="evidence" value="ECO:0000314"/>
    <property type="project" value="UniProtKB"/>
</dbReference>
<dbReference type="GO" id="GO:0038023">
    <property type="term" value="F:signaling receptor activity"/>
    <property type="evidence" value="ECO:0000314"/>
    <property type="project" value="UniProtKB"/>
</dbReference>
<dbReference type="GO" id="GO:0004888">
    <property type="term" value="F:transmembrane signaling receptor activity"/>
    <property type="evidence" value="ECO:0000318"/>
    <property type="project" value="GO_Central"/>
</dbReference>
<dbReference type="GO" id="GO:0007155">
    <property type="term" value="P:cell adhesion"/>
    <property type="evidence" value="ECO:0007669"/>
    <property type="project" value="UniProtKB-KW"/>
</dbReference>
<dbReference type="GO" id="GO:0002376">
    <property type="term" value="P:immune system process"/>
    <property type="evidence" value="ECO:0007669"/>
    <property type="project" value="UniProtKB-KW"/>
</dbReference>
<dbReference type="GO" id="GO:0035556">
    <property type="term" value="P:intracellular signal transduction"/>
    <property type="evidence" value="ECO:0000314"/>
    <property type="project" value="UniProtKB"/>
</dbReference>
<dbReference type="GO" id="GO:0030889">
    <property type="term" value="P:negative regulation of B cell proliferation"/>
    <property type="evidence" value="ECO:0000315"/>
    <property type="project" value="UniProtKB"/>
</dbReference>
<dbReference type="GO" id="GO:0050859">
    <property type="term" value="P:negative regulation of B cell receptor signaling pathway"/>
    <property type="evidence" value="ECO:0000314"/>
    <property type="project" value="UniProtKB"/>
</dbReference>
<dbReference type="GO" id="GO:1902567">
    <property type="term" value="P:negative regulation of eosinophil activation"/>
    <property type="evidence" value="ECO:0000314"/>
    <property type="project" value="UniProtKB"/>
</dbReference>
<dbReference type="GO" id="GO:2000417">
    <property type="term" value="P:negative regulation of eosinophil migration"/>
    <property type="evidence" value="ECO:0000314"/>
    <property type="project" value="UniProtKB"/>
</dbReference>
<dbReference type="GO" id="GO:0048147">
    <property type="term" value="P:negative regulation of fibroblast proliferation"/>
    <property type="evidence" value="ECO:0000314"/>
    <property type="project" value="UniProtKB"/>
</dbReference>
<dbReference type="GO" id="GO:0043407">
    <property type="term" value="P:negative regulation of MAP kinase activity"/>
    <property type="evidence" value="ECO:0000314"/>
    <property type="project" value="UniProtKB"/>
</dbReference>
<dbReference type="GO" id="GO:0033007">
    <property type="term" value="P:negative regulation of mast cell activation involved in immune response"/>
    <property type="evidence" value="ECO:0000314"/>
    <property type="project" value="UniProtKB"/>
</dbReference>
<dbReference type="GO" id="GO:0043305">
    <property type="term" value="P:negative regulation of mast cell degranulation"/>
    <property type="evidence" value="ECO:0000314"/>
    <property type="project" value="UniProtKB"/>
</dbReference>
<dbReference type="GO" id="GO:0034125">
    <property type="term" value="P:negative regulation of MyD88-dependent toll-like receptor signaling pathway"/>
    <property type="evidence" value="ECO:0000315"/>
    <property type="project" value="UniProtKB"/>
</dbReference>
<dbReference type="GO" id="GO:1902564">
    <property type="term" value="P:negative regulation of neutrophil activation"/>
    <property type="evidence" value="ECO:0000314"/>
    <property type="project" value="UniProtKB"/>
</dbReference>
<dbReference type="GO" id="GO:0051134">
    <property type="term" value="P:negative regulation of NK T cell activation"/>
    <property type="evidence" value="ECO:0000314"/>
    <property type="project" value="UniProtKB"/>
</dbReference>
<dbReference type="GO" id="GO:0060101">
    <property type="term" value="P:negative regulation of phagocytosis, engulfment"/>
    <property type="evidence" value="ECO:0000315"/>
    <property type="project" value="UniProtKB"/>
</dbReference>
<dbReference type="GO" id="GO:0045088">
    <property type="term" value="P:regulation of innate immune response"/>
    <property type="evidence" value="ECO:0000318"/>
    <property type="project" value="GO_Central"/>
</dbReference>
<dbReference type="GO" id="GO:0050856">
    <property type="term" value="P:regulation of T cell receptor signaling pathway"/>
    <property type="evidence" value="ECO:0000314"/>
    <property type="project" value="UniProtKB"/>
</dbReference>
<dbReference type="GO" id="GO:0007165">
    <property type="term" value="P:signal transduction"/>
    <property type="evidence" value="ECO:0000318"/>
    <property type="project" value="GO_Central"/>
</dbReference>
<dbReference type="CDD" id="cd05716">
    <property type="entry name" value="IgV_pIgR_like"/>
    <property type="match status" value="1"/>
</dbReference>
<dbReference type="FunFam" id="2.60.40.10:FF:000370">
    <property type="entry name" value="CMRF35-like molecule 1"/>
    <property type="match status" value="1"/>
</dbReference>
<dbReference type="Gene3D" id="2.60.40.10">
    <property type="entry name" value="Immunoglobulins"/>
    <property type="match status" value="1"/>
</dbReference>
<dbReference type="InterPro" id="IPR050671">
    <property type="entry name" value="CD300_family_receptors"/>
</dbReference>
<dbReference type="InterPro" id="IPR007110">
    <property type="entry name" value="Ig-like_dom"/>
</dbReference>
<dbReference type="InterPro" id="IPR036179">
    <property type="entry name" value="Ig-like_dom_sf"/>
</dbReference>
<dbReference type="InterPro" id="IPR013783">
    <property type="entry name" value="Ig-like_fold"/>
</dbReference>
<dbReference type="InterPro" id="IPR003599">
    <property type="entry name" value="Ig_sub"/>
</dbReference>
<dbReference type="InterPro" id="IPR013106">
    <property type="entry name" value="Ig_V-set"/>
</dbReference>
<dbReference type="PANTHER" id="PTHR11860:SF87">
    <property type="entry name" value="CMRF35-LIKE MOLECULE 8"/>
    <property type="match status" value="1"/>
</dbReference>
<dbReference type="PANTHER" id="PTHR11860">
    <property type="entry name" value="POLYMERIC-IMMUNOGLOBULIN RECEPTOR"/>
    <property type="match status" value="1"/>
</dbReference>
<dbReference type="Pfam" id="PF15330">
    <property type="entry name" value="SIT"/>
    <property type="match status" value="1"/>
</dbReference>
<dbReference type="Pfam" id="PF07686">
    <property type="entry name" value="V-set"/>
    <property type="match status" value="1"/>
</dbReference>
<dbReference type="SMART" id="SM00409">
    <property type="entry name" value="IG"/>
    <property type="match status" value="1"/>
</dbReference>
<dbReference type="SUPFAM" id="SSF48726">
    <property type="entry name" value="Immunoglobulin"/>
    <property type="match status" value="1"/>
</dbReference>
<dbReference type="PROSITE" id="PS50835">
    <property type="entry name" value="IG_LIKE"/>
    <property type="match status" value="1"/>
</dbReference>
<reference key="1">
    <citation type="journal article" date="1999" name="Eur. J. Immunol.">
        <title>Molecular and functional characterization of IRp60, a member of the immunoglobulin superfamily that functions as an inhibitory receptor in human NK cells.</title>
        <authorList>
            <person name="Cantoni C."/>
            <person name="Bottino C."/>
            <person name="Augugliaro R."/>
            <person name="Morelli L."/>
            <person name="Marcenaro E."/>
            <person name="Castriconi R."/>
            <person name="Vitale M."/>
            <person name="Pende D."/>
            <person name="Sivori S."/>
            <person name="Millo R."/>
            <person name="Biassoni R."/>
            <person name="Moretta L."/>
            <person name="Moretta A."/>
        </authorList>
    </citation>
    <scope>NUCLEOTIDE SEQUENCE [MRNA] (ISOFORM 1)</scope>
    <scope>TISSUE SPECIFICITY</scope>
    <scope>PHOSPHORYLATION</scope>
    <source>
        <tissue>Lymphoid tissue</tissue>
    </source>
</reference>
<reference key="2">
    <citation type="submission" date="1998-08" db="EMBL/GenBank/DDBJ databases">
        <title>IRC1 isoforms.</title>
        <authorList>
            <person name="Cantoni C."/>
            <person name="Biassoni R."/>
        </authorList>
    </citation>
    <scope>NUCLEOTIDE SEQUENCE [MRNA] (ISOFORMS 1; 2 AND 3)</scope>
    <scope>VARIANT GLN-111</scope>
    <source>
        <tissue>Lymphoid tissue</tissue>
    </source>
</reference>
<reference key="3">
    <citation type="journal article" date="1998" name="Int. Immunol.">
        <title>The CMRF-35 mAb recognizes a second leukocyte membrane molecule with a domain similar to the poly Ig receptor.</title>
        <authorList>
            <person name="Green B.J."/>
            <person name="Clark G.J."/>
            <person name="Hart D.N.J."/>
        </authorList>
    </citation>
    <scope>NUCLEOTIDE SEQUENCE [MRNA] (ISOFORM 1)</scope>
    <scope>FUNCTION</scope>
    <scope>TISSUE SPECIFICITY</scope>
</reference>
<reference key="4">
    <citation type="journal article" date="2000" name="Tissue Antigens">
        <title>The CMRF-35H gene structure predicts for an independently expressed member of an ITIM/ITAM pair of molecules localized to human chromosome 17.</title>
        <authorList>
            <person name="Clark G.J."/>
            <person name="Green B.J."/>
            <person name="Hart D.N.J."/>
        </authorList>
    </citation>
    <scope>NUCLEOTIDE SEQUENCE [GENOMIC DNA / MRNA] (ISOFORM 1)</scope>
    <scope>FUNCTION</scope>
</reference>
<reference key="5">
    <citation type="submission" date="1999-05" db="EMBL/GenBank/DDBJ databases">
        <title>Human partial CDS cloned from CD34+ stem cells.</title>
        <authorList>
            <person name="Zhang Q.H."/>
            <person name="Ye M."/>
            <person name="Zhou J."/>
            <person name="Shen Y."/>
            <person name="Wu X.Y."/>
            <person name="Guan Z.Q."/>
            <person name="Wang L."/>
            <person name="Fan H.Y."/>
            <person name="Mao Y.F."/>
            <person name="Dai M."/>
            <person name="Huang Q.H."/>
            <person name="Chen S.J."/>
            <person name="Chen Z."/>
        </authorList>
    </citation>
    <scope>NUCLEOTIDE SEQUENCE [LARGE SCALE MRNA] (ISOFORM 4)</scope>
    <source>
        <tissue>Umbilical cord blood</tissue>
    </source>
</reference>
<reference key="6">
    <citation type="journal article" date="2006" name="Nature">
        <title>DNA sequence of human chromosome 17 and analysis of rearrangement in the human lineage.</title>
        <authorList>
            <person name="Zody M.C."/>
            <person name="Garber M."/>
            <person name="Adams D.J."/>
            <person name="Sharpe T."/>
            <person name="Harrow J."/>
            <person name="Lupski J.R."/>
            <person name="Nicholson C."/>
            <person name="Searle S.M."/>
            <person name="Wilming L."/>
            <person name="Young S.K."/>
            <person name="Abouelleil A."/>
            <person name="Allen N.R."/>
            <person name="Bi W."/>
            <person name="Bloom T."/>
            <person name="Borowsky M.L."/>
            <person name="Bugalter B.E."/>
            <person name="Butler J."/>
            <person name="Chang J.L."/>
            <person name="Chen C.-K."/>
            <person name="Cook A."/>
            <person name="Corum B."/>
            <person name="Cuomo C.A."/>
            <person name="de Jong P.J."/>
            <person name="DeCaprio D."/>
            <person name="Dewar K."/>
            <person name="FitzGerald M."/>
            <person name="Gilbert J."/>
            <person name="Gibson R."/>
            <person name="Gnerre S."/>
            <person name="Goldstein S."/>
            <person name="Grafham D.V."/>
            <person name="Grocock R."/>
            <person name="Hafez N."/>
            <person name="Hagopian D.S."/>
            <person name="Hart E."/>
            <person name="Norman C.H."/>
            <person name="Humphray S."/>
            <person name="Jaffe D.B."/>
            <person name="Jones M."/>
            <person name="Kamal M."/>
            <person name="Khodiyar V.K."/>
            <person name="LaButti K."/>
            <person name="Laird G."/>
            <person name="Lehoczky J."/>
            <person name="Liu X."/>
            <person name="Lokyitsang T."/>
            <person name="Loveland J."/>
            <person name="Lui A."/>
            <person name="Macdonald P."/>
            <person name="Major J.E."/>
            <person name="Matthews L."/>
            <person name="Mauceli E."/>
            <person name="McCarroll S.A."/>
            <person name="Mihalev A.H."/>
            <person name="Mudge J."/>
            <person name="Nguyen C."/>
            <person name="Nicol R."/>
            <person name="O'Leary S.B."/>
            <person name="Osoegawa K."/>
            <person name="Schwartz D.C."/>
            <person name="Shaw-Smith C."/>
            <person name="Stankiewicz P."/>
            <person name="Steward C."/>
            <person name="Swarbreck D."/>
            <person name="Venkataraman V."/>
            <person name="Whittaker C.A."/>
            <person name="Yang X."/>
            <person name="Zimmer A.R."/>
            <person name="Bradley A."/>
            <person name="Hubbard T."/>
            <person name="Birren B.W."/>
            <person name="Rogers J."/>
            <person name="Lander E.S."/>
            <person name="Nusbaum C."/>
        </authorList>
    </citation>
    <scope>NUCLEOTIDE SEQUENCE [LARGE SCALE GENOMIC DNA]</scope>
</reference>
<reference key="7">
    <citation type="journal article" date="2004" name="Genome Res.">
        <title>The status, quality, and expansion of the NIH full-length cDNA project: the Mammalian Gene Collection (MGC).</title>
        <authorList>
            <consortium name="The MGC Project Team"/>
        </authorList>
    </citation>
    <scope>NUCLEOTIDE SEQUENCE [LARGE SCALE MRNA] (ISOFORM 1)</scope>
    <source>
        <tissue>Blood</tissue>
    </source>
</reference>
<reference key="8">
    <citation type="journal article" date="2005" name="J. Immunol.">
        <title>The inhibitory receptor IRp60 (CD300a) is expressed and functional on human mast cells.</title>
        <authorList>
            <person name="Bachelet I."/>
            <person name="Munitz A."/>
            <person name="Moretta A."/>
            <person name="Moretta L."/>
            <person name="Levi-Schaffer F."/>
        </authorList>
    </citation>
    <scope>FUNCTION</scope>
    <scope>PHOSPHORYLATION</scope>
    <scope>TISSUE SPECIFICITY</scope>
</reference>
<reference key="9">
    <citation type="journal article" date="2012" name="Immunology">
        <title>CD300a and CD300f differentially regulate the MyD88 and TRIF-mediated TLR signalling pathways through activation of SHP-1 and/or SHP-2 in human monocytic cell lines.</title>
        <authorList>
            <person name="Kim E.J."/>
            <person name="Lee S.M."/>
            <person name="Suk K."/>
            <person name="Lee W.H."/>
        </authorList>
    </citation>
    <scope>FUNCTION</scope>
</reference>
<reference key="10">
    <citation type="submission" date="2007-06" db="PDB data bank">
        <title>The crystal structure of IRp60 ectodomain.</title>
        <authorList>
            <person name="Dimasi N."/>
            <person name="Marquez J.A."/>
        </authorList>
    </citation>
    <scope>X-RAY CRYSTALLOGRAPHY (1.7 ANGSTROMS) OF 19-128</scope>
</reference>
<reference key="11">
    <citation type="journal article" date="2003" name="Hum. Genet.">
        <title>Novel immunoglobulin superfamily gene cluster, mapping to a region of human chromosome 17q25, linked to psoriasis susceptibility.</title>
        <authorList>
            <person name="Speckman R.A."/>
            <person name="Wright Daw J.A."/>
            <person name="Helms C."/>
            <person name="Duan S."/>
            <person name="Cao L."/>
            <person name="Taillon-Miller P."/>
            <person name="Kwok P.Y."/>
            <person name="Menter A."/>
            <person name="Bowcock A.M."/>
        </authorList>
    </citation>
    <scope>VARIANT GLN-111</scope>
</reference>
<protein>
    <recommendedName>
        <fullName>CMRF35-like molecule 8</fullName>
        <shortName>CLM-8</shortName>
    </recommendedName>
    <alternativeName>
        <fullName>CD300 antigen-like family member A</fullName>
    </alternativeName>
    <alternativeName>
        <fullName>CMRF-35-H9</fullName>
        <shortName>CMRF35-H9</shortName>
    </alternativeName>
    <alternativeName>
        <fullName>CMRF35-H</fullName>
    </alternativeName>
    <alternativeName>
        <fullName>IRC1/IRC2</fullName>
    </alternativeName>
    <alternativeName>
        <fullName>Immunoglobulin superfamily member 12</fullName>
        <shortName>IgSF12</shortName>
    </alternativeName>
    <alternativeName>
        <fullName>Inhibitory receptor protein 60</fullName>
        <shortName>IRp60</shortName>
    </alternativeName>
    <alternativeName>
        <fullName>NK inhibitory receptor</fullName>
    </alternativeName>
    <cdAntigenName>CD300a</cdAntigenName>
</protein>
<accession>Q9UGN4</accession>
<accession>A8MW96</accession>
<accession>O95100</accession>
<accession>Q9HD97</accession>
<accession>Q9P0F3</accession>
<accession>Q9UBK4</accession>
<accession>Q9UMS9</accession>
<accession>Q9UMT0</accession>
<comment type="function">
    <text evidence="6 8 9 10">Inhibitory receptor which may contribute to the down-regulation of cytolytic activity in natural killer (NK) cells, and to the down-regulation of mast cell degranulation (PubMed:10746781, PubMed:16339535, PubMed:9701027). Negatively regulates the Toll-like receptor (TLR) signaling mediated by MYD88 but not TRIF through activation of PTPN6 (PubMed:22043923).</text>
</comment>
<comment type="subunit">
    <text evidence="1">Upon tyrosine-phosphorylation, interacts with PTN6/SHP-1 and PTPN11/SHP-2 and INPP5D.</text>
</comment>
<comment type="interaction">
    <interactant intactId="EBI-10320732">
        <id>Q9UGN4</id>
    </interactant>
    <interactant intactId="EBI-26499879">
        <id>A8K4G0</id>
        <label>CD300LB</label>
    </interactant>
    <organismsDiffer>false</organismsDiffer>
    <experiments>2</experiments>
</comment>
<comment type="interaction">
    <interactant intactId="EBI-10320732">
        <id>Q9UGN4</id>
    </interactant>
    <interactant intactId="EBI-1047263">
        <id>O76015</id>
        <label>KRT38</label>
    </interactant>
    <organismsDiffer>false</organismsDiffer>
    <experiments>3</experiments>
</comment>
<comment type="interaction">
    <interactant intactId="EBI-10320732">
        <id>Q9UGN4</id>
    </interactant>
    <interactant intactId="EBI-8652744">
        <id>Q96IW7</id>
        <label>SEC22A</label>
    </interactant>
    <organismsDiffer>false</organismsDiffer>
    <experiments>3</experiments>
</comment>
<comment type="interaction">
    <interactant intactId="EBI-10320732">
        <id>Q9UGN4</id>
    </interactant>
    <interactant intactId="EBI-10265825">
        <id>Q8N511</id>
        <label>TMEM199</label>
    </interactant>
    <organismsDiffer>false</organismsDiffer>
    <experiments>3</experiments>
</comment>
<comment type="interaction">
    <interactant intactId="EBI-10320732">
        <id>Q9UGN4</id>
    </interactant>
    <interactant intactId="EBI-10173151">
        <id>A2RU14</id>
        <label>TMEM218</label>
    </interactant>
    <organismsDiffer>false</organismsDiffer>
    <experiments>3</experiments>
</comment>
<comment type="interaction">
    <interactant intactId="EBI-10320732">
        <id>Q9UGN4</id>
    </interactant>
    <interactant intactId="EBI-2852148">
        <id>Q9H2L4</id>
        <label>TMEM60</label>
    </interactant>
    <organismsDiffer>false</organismsDiffer>
    <experiments>3</experiments>
</comment>
<comment type="subcellular location">
    <subcellularLocation>
        <location evidence="14">Cell membrane</location>
        <topology evidence="14">Single-pass type I membrane protein</topology>
    </subcellularLocation>
</comment>
<comment type="alternative products">
    <event type="alternative splicing"/>
    <isoform>
        <id>Q9UGN4-1</id>
        <name>1</name>
        <name>IRC1a</name>
        <sequence type="displayed"/>
    </isoform>
    <isoform>
        <id>Q9UGN4-2</id>
        <name>2</name>
        <name>IRC1c</name>
        <sequence type="described" ref="VSP_010559"/>
    </isoform>
    <isoform>
        <id>Q9UGN4-3</id>
        <name>3</name>
        <name>IRC1b</name>
        <sequence type="described" ref="VSP_010558"/>
    </isoform>
    <isoform>
        <id>Q9UGN4-4</id>
        <name>4</name>
        <sequence type="described" ref="VSP_010559 VSP_041246"/>
    </isoform>
</comment>
<comment type="tissue specificity">
    <text evidence="5 8 10">Expressed not only by natural killer (NK) cells but also by T-cell subsets, B-cells, dendritic cells, mast cells, granulocytes and monocytes.</text>
</comment>
<comment type="PTM">
    <text evidence="5 8">Phosphorylated on tyrosine.</text>
</comment>
<comment type="PTM">
    <text evidence="1">N-glycosylated.</text>
</comment>
<comment type="similarity">
    <text evidence="14">Belongs to the CD300 family.</text>
</comment>
<comment type="sequence caution" evidence="14">
    <conflict type="erroneous initiation">
        <sequence resource="EMBL-CDS" id="AAF28906"/>
    </conflict>
    <text>Extended N-terminus.</text>
</comment>
<comment type="sequence caution" evidence="14">
    <conflict type="frameshift">
        <sequence resource="EMBL-CDS" id="AAF28906"/>
    </conflict>
</comment>
<evidence type="ECO:0000250" key="1">
    <source>
        <dbReference type="UniProtKB" id="Q6SJQ0"/>
    </source>
</evidence>
<evidence type="ECO:0000255" key="2"/>
<evidence type="ECO:0000255" key="3">
    <source>
        <dbReference type="PROSITE-ProRule" id="PRU00114"/>
    </source>
</evidence>
<evidence type="ECO:0000256" key="4">
    <source>
        <dbReference type="SAM" id="MobiDB-lite"/>
    </source>
</evidence>
<evidence type="ECO:0000269" key="5">
    <source>
    </source>
</evidence>
<evidence type="ECO:0000269" key="6">
    <source>
    </source>
</evidence>
<evidence type="ECO:0000269" key="7">
    <source>
    </source>
</evidence>
<evidence type="ECO:0000269" key="8">
    <source>
    </source>
</evidence>
<evidence type="ECO:0000269" key="9">
    <source>
    </source>
</evidence>
<evidence type="ECO:0000269" key="10">
    <source>
    </source>
</evidence>
<evidence type="ECO:0000269" key="11">
    <source ref="2"/>
</evidence>
<evidence type="ECO:0000303" key="12">
    <source ref="2"/>
</evidence>
<evidence type="ECO:0000303" key="13">
    <source ref="5"/>
</evidence>
<evidence type="ECO:0000305" key="14"/>
<evidence type="ECO:0007829" key="15">
    <source>
        <dbReference type="PDB" id="2Q87"/>
    </source>
</evidence>
<organism>
    <name type="scientific">Homo sapiens</name>
    <name type="common">Human</name>
    <dbReference type="NCBI Taxonomy" id="9606"/>
    <lineage>
        <taxon>Eukaryota</taxon>
        <taxon>Metazoa</taxon>
        <taxon>Chordata</taxon>
        <taxon>Craniata</taxon>
        <taxon>Vertebrata</taxon>
        <taxon>Euteleostomi</taxon>
        <taxon>Mammalia</taxon>
        <taxon>Eutheria</taxon>
        <taxon>Euarchontoglires</taxon>
        <taxon>Primates</taxon>
        <taxon>Haplorrhini</taxon>
        <taxon>Catarrhini</taxon>
        <taxon>Hominidae</taxon>
        <taxon>Homo</taxon>
    </lineage>
</organism>